<dbReference type="EC" id="2.5.1.7" evidence="1"/>
<dbReference type="EMBL" id="BA000034">
    <property type="protein sequence ID" value="BAC64447.1"/>
    <property type="status" value="ALT_INIT"/>
    <property type="molecule type" value="Genomic_DNA"/>
</dbReference>
<dbReference type="RefSeq" id="WP_002990414.1">
    <property type="nucleotide sequence ID" value="NC_004606.1"/>
</dbReference>
<dbReference type="SMR" id="P0DC45"/>
<dbReference type="GeneID" id="69901111"/>
<dbReference type="KEGG" id="sps:SPs1352"/>
<dbReference type="HOGENOM" id="CLU_027387_0_0_9"/>
<dbReference type="UniPathway" id="UPA00219"/>
<dbReference type="GO" id="GO:0005737">
    <property type="term" value="C:cytoplasm"/>
    <property type="evidence" value="ECO:0007669"/>
    <property type="project" value="UniProtKB-SubCell"/>
</dbReference>
<dbReference type="GO" id="GO:0008760">
    <property type="term" value="F:UDP-N-acetylglucosamine 1-carboxyvinyltransferase activity"/>
    <property type="evidence" value="ECO:0007669"/>
    <property type="project" value="UniProtKB-UniRule"/>
</dbReference>
<dbReference type="GO" id="GO:0051301">
    <property type="term" value="P:cell division"/>
    <property type="evidence" value="ECO:0007669"/>
    <property type="project" value="UniProtKB-KW"/>
</dbReference>
<dbReference type="GO" id="GO:0071555">
    <property type="term" value="P:cell wall organization"/>
    <property type="evidence" value="ECO:0007669"/>
    <property type="project" value="UniProtKB-KW"/>
</dbReference>
<dbReference type="GO" id="GO:0009252">
    <property type="term" value="P:peptidoglycan biosynthetic process"/>
    <property type="evidence" value="ECO:0007669"/>
    <property type="project" value="UniProtKB-UniRule"/>
</dbReference>
<dbReference type="GO" id="GO:0008360">
    <property type="term" value="P:regulation of cell shape"/>
    <property type="evidence" value="ECO:0007669"/>
    <property type="project" value="UniProtKB-KW"/>
</dbReference>
<dbReference type="GO" id="GO:0019277">
    <property type="term" value="P:UDP-N-acetylgalactosamine biosynthetic process"/>
    <property type="evidence" value="ECO:0007669"/>
    <property type="project" value="InterPro"/>
</dbReference>
<dbReference type="CDD" id="cd01555">
    <property type="entry name" value="UdpNAET"/>
    <property type="match status" value="1"/>
</dbReference>
<dbReference type="FunFam" id="3.65.10.10:FF:000001">
    <property type="entry name" value="UDP-N-acetylglucosamine 1-carboxyvinyltransferase"/>
    <property type="match status" value="1"/>
</dbReference>
<dbReference type="Gene3D" id="3.65.10.10">
    <property type="entry name" value="Enolpyruvate transferase domain"/>
    <property type="match status" value="2"/>
</dbReference>
<dbReference type="HAMAP" id="MF_00111">
    <property type="entry name" value="MurA"/>
    <property type="match status" value="1"/>
</dbReference>
<dbReference type="InterPro" id="IPR001986">
    <property type="entry name" value="Enolpyruvate_Tfrase_dom"/>
</dbReference>
<dbReference type="InterPro" id="IPR036968">
    <property type="entry name" value="Enolpyruvate_Tfrase_sf"/>
</dbReference>
<dbReference type="InterPro" id="IPR050068">
    <property type="entry name" value="MurA_subfamily"/>
</dbReference>
<dbReference type="InterPro" id="IPR013792">
    <property type="entry name" value="RNA3'P_cycl/enolpyr_Trfase_a/b"/>
</dbReference>
<dbReference type="InterPro" id="IPR005750">
    <property type="entry name" value="UDP_GlcNAc_COvinyl_MurA"/>
</dbReference>
<dbReference type="NCBIfam" id="TIGR01072">
    <property type="entry name" value="murA"/>
    <property type="match status" value="1"/>
</dbReference>
<dbReference type="NCBIfam" id="NF006873">
    <property type="entry name" value="PRK09369.1"/>
    <property type="match status" value="1"/>
</dbReference>
<dbReference type="PANTHER" id="PTHR43783">
    <property type="entry name" value="UDP-N-ACETYLGLUCOSAMINE 1-CARBOXYVINYLTRANSFERASE"/>
    <property type="match status" value="1"/>
</dbReference>
<dbReference type="PANTHER" id="PTHR43783:SF1">
    <property type="entry name" value="UDP-N-ACETYLGLUCOSAMINE 1-CARBOXYVINYLTRANSFERASE"/>
    <property type="match status" value="1"/>
</dbReference>
<dbReference type="Pfam" id="PF00275">
    <property type="entry name" value="EPSP_synthase"/>
    <property type="match status" value="1"/>
</dbReference>
<dbReference type="SUPFAM" id="SSF55205">
    <property type="entry name" value="EPT/RTPC-like"/>
    <property type="match status" value="1"/>
</dbReference>
<proteinExistence type="inferred from homology"/>
<reference key="1">
    <citation type="journal article" date="2003" name="Genome Res.">
        <title>Genome sequence of an M3 strain of Streptococcus pyogenes reveals a large-scale genomic rearrangement in invasive strains and new insights into phage evolution.</title>
        <authorList>
            <person name="Nakagawa I."/>
            <person name="Kurokawa K."/>
            <person name="Yamashita A."/>
            <person name="Nakata M."/>
            <person name="Tomiyasu Y."/>
            <person name="Okahashi N."/>
            <person name="Kawabata S."/>
            <person name="Yamazaki K."/>
            <person name="Shiba T."/>
            <person name="Yasunaga T."/>
            <person name="Hayashi H."/>
            <person name="Hattori M."/>
            <person name="Hamada S."/>
        </authorList>
    </citation>
    <scope>NUCLEOTIDE SEQUENCE [LARGE SCALE GENOMIC DNA]</scope>
    <source>
        <strain>SSI-1</strain>
    </source>
</reference>
<sequence length="423" mass="45601">MDKIIIEGGQTRLEGEVVIEGAKNAVLPLLAASILPSKGKTILRNVPILSDVFTMNNVVRGLDIRVDFNEAANEITVDASGHILDEAPYEYVSQMRASIVVLGPILARNGHAKVSMPGGCTIGSRPINLHLKGLEAMGATITQKGGDITAQADRLQGAMIYMDFPSVGATQNLMMAATLADGVTTIENAAREPEIVDLAQFLNKMGARIRGAGTETLTITGVTSLHGVEHDVVQDRIEAGTFMVAAAMTSGNVLIRDAVWEHNRPLISKLMEMGVSVTEEEYGIRVQANTPKLKPVTVKTLPHPGFPTDMQAQFTALMAVVNGESTMVETVFENRFQHLEEMRRMGLQSEILRETAMIHGGRQLQGAPVMSTDLRASAALILTGIVAQGVTIVNNLVHLDRGYYQFHEKLAKLGATISRSSEV</sequence>
<organism>
    <name type="scientific">Streptococcus pyogenes serotype M3 (strain SSI-1)</name>
    <dbReference type="NCBI Taxonomy" id="193567"/>
    <lineage>
        <taxon>Bacteria</taxon>
        <taxon>Bacillati</taxon>
        <taxon>Bacillota</taxon>
        <taxon>Bacilli</taxon>
        <taxon>Lactobacillales</taxon>
        <taxon>Streptococcaceae</taxon>
        <taxon>Streptococcus</taxon>
    </lineage>
</organism>
<evidence type="ECO:0000255" key="1">
    <source>
        <dbReference type="HAMAP-Rule" id="MF_00111"/>
    </source>
</evidence>
<evidence type="ECO:0000305" key="2"/>
<accession>P0DC45</accession>
<accession>Q8K825</accession>
<name>MURA1_STRPQ</name>
<gene>
    <name evidence="1" type="primary">murA1</name>
    <name type="synonym">murA</name>
    <name type="ordered locus">SPs1352</name>
</gene>
<keyword id="KW-0131">Cell cycle</keyword>
<keyword id="KW-0132">Cell division</keyword>
<keyword id="KW-0133">Cell shape</keyword>
<keyword id="KW-0961">Cell wall biogenesis/degradation</keyword>
<keyword id="KW-0963">Cytoplasm</keyword>
<keyword id="KW-0573">Peptidoglycan synthesis</keyword>
<keyword id="KW-0670">Pyruvate</keyword>
<keyword id="KW-0808">Transferase</keyword>
<feature type="chain" id="PRO_0000411410" description="UDP-N-acetylglucosamine 1-carboxyvinyltransferase 1">
    <location>
        <begin position="1"/>
        <end position="423"/>
    </location>
</feature>
<feature type="active site" description="Proton donor" evidence="1">
    <location>
        <position position="120"/>
    </location>
</feature>
<feature type="binding site" evidence="1">
    <location>
        <begin position="23"/>
        <end position="24"/>
    </location>
    <ligand>
        <name>phosphoenolpyruvate</name>
        <dbReference type="ChEBI" id="CHEBI:58702"/>
    </ligand>
</feature>
<feature type="binding site" evidence="1">
    <location>
        <position position="96"/>
    </location>
    <ligand>
        <name>UDP-N-acetyl-alpha-D-glucosamine</name>
        <dbReference type="ChEBI" id="CHEBI:57705"/>
    </ligand>
</feature>
<feature type="binding site" evidence="1">
    <location>
        <position position="309"/>
    </location>
    <ligand>
        <name>UDP-N-acetyl-alpha-D-glucosamine</name>
        <dbReference type="ChEBI" id="CHEBI:57705"/>
    </ligand>
</feature>
<feature type="binding site" evidence="1">
    <location>
        <position position="331"/>
    </location>
    <ligand>
        <name>UDP-N-acetyl-alpha-D-glucosamine</name>
        <dbReference type="ChEBI" id="CHEBI:57705"/>
    </ligand>
</feature>
<feature type="modified residue" description="2-(S-cysteinyl)pyruvic acid O-phosphothioketal" evidence="1">
    <location>
        <position position="120"/>
    </location>
</feature>
<protein>
    <recommendedName>
        <fullName evidence="1">UDP-N-acetylglucosamine 1-carboxyvinyltransferase 1</fullName>
        <ecNumber evidence="1">2.5.1.7</ecNumber>
    </recommendedName>
    <alternativeName>
        <fullName evidence="1">Enoylpyruvate transferase 1</fullName>
    </alternativeName>
    <alternativeName>
        <fullName evidence="1">UDP-N-acetylglucosamine enolpyruvyl transferase 1</fullName>
        <shortName evidence="1">EPT 1</shortName>
    </alternativeName>
</protein>
<comment type="function">
    <text evidence="1">Cell wall formation. Adds enolpyruvyl to UDP-N-acetylglucosamine.</text>
</comment>
<comment type="catalytic activity">
    <reaction evidence="1">
        <text>phosphoenolpyruvate + UDP-N-acetyl-alpha-D-glucosamine = UDP-N-acetyl-3-O-(1-carboxyvinyl)-alpha-D-glucosamine + phosphate</text>
        <dbReference type="Rhea" id="RHEA:18681"/>
        <dbReference type="ChEBI" id="CHEBI:43474"/>
        <dbReference type="ChEBI" id="CHEBI:57705"/>
        <dbReference type="ChEBI" id="CHEBI:58702"/>
        <dbReference type="ChEBI" id="CHEBI:68483"/>
        <dbReference type="EC" id="2.5.1.7"/>
    </reaction>
</comment>
<comment type="pathway">
    <text evidence="1">Cell wall biogenesis; peptidoglycan biosynthesis.</text>
</comment>
<comment type="subcellular location">
    <subcellularLocation>
        <location evidence="1">Cytoplasm</location>
    </subcellularLocation>
</comment>
<comment type="similarity">
    <text evidence="1">Belongs to the EPSP synthase family. MurA subfamily.</text>
</comment>
<comment type="sequence caution" evidence="2">
    <conflict type="erroneous initiation">
        <sequence resource="EMBL-CDS" id="BAC64447"/>
    </conflict>
</comment>